<dbReference type="EMBL" id="AL133314">
    <property type="protein sequence ID" value="CAB62331.1"/>
    <property type="molecule type" value="Genomic_DNA"/>
</dbReference>
<dbReference type="EMBL" id="CP002686">
    <property type="protein sequence ID" value="AEE78181.1"/>
    <property type="molecule type" value="Genomic_DNA"/>
</dbReference>
<dbReference type="EMBL" id="CP002686">
    <property type="protein sequence ID" value="ANM65376.1"/>
    <property type="molecule type" value="Genomic_DNA"/>
</dbReference>
<dbReference type="EMBL" id="BX825001">
    <property type="status" value="NOT_ANNOTATED_CDS"/>
    <property type="molecule type" value="mRNA"/>
</dbReference>
<dbReference type="PIR" id="T45598">
    <property type="entry name" value="T45598"/>
</dbReference>
<dbReference type="RefSeq" id="NP_001319696.1">
    <property type="nucleotide sequence ID" value="NM_001339269.1"/>
</dbReference>
<dbReference type="RefSeq" id="NP_190245.1">
    <property type="nucleotide sequence ID" value="NM_114528.2"/>
</dbReference>
<dbReference type="SMR" id="Q9SNB7"/>
<dbReference type="FunCoup" id="Q9SNB7">
    <property type="interactions" value="1853"/>
</dbReference>
<dbReference type="STRING" id="3702.Q9SNB7"/>
<dbReference type="PaxDb" id="3702-AT3G46610.1"/>
<dbReference type="ProteomicsDB" id="248954"/>
<dbReference type="EnsemblPlants" id="AT3G46610.1">
    <property type="protein sequence ID" value="AT3G46610.1"/>
    <property type="gene ID" value="AT3G46610"/>
</dbReference>
<dbReference type="EnsemblPlants" id="AT3G46610.2">
    <property type="protein sequence ID" value="AT3G46610.2"/>
    <property type="gene ID" value="AT3G46610"/>
</dbReference>
<dbReference type="GeneID" id="823814"/>
<dbReference type="Gramene" id="AT3G46610.1">
    <property type="protein sequence ID" value="AT3G46610.1"/>
    <property type="gene ID" value="AT3G46610"/>
</dbReference>
<dbReference type="Gramene" id="AT3G46610.2">
    <property type="protein sequence ID" value="AT3G46610.2"/>
    <property type="gene ID" value="AT3G46610"/>
</dbReference>
<dbReference type="KEGG" id="ath:AT3G46610"/>
<dbReference type="Araport" id="AT3G46610"/>
<dbReference type="TAIR" id="AT3G46610">
    <property type="gene designation" value="LPE1"/>
</dbReference>
<dbReference type="eggNOG" id="KOG4197">
    <property type="taxonomic scope" value="Eukaryota"/>
</dbReference>
<dbReference type="HOGENOM" id="CLU_021023_0_0_1"/>
<dbReference type="InParanoid" id="Q9SNB7"/>
<dbReference type="OMA" id="LQVWKHM"/>
<dbReference type="PhylomeDB" id="Q9SNB7"/>
<dbReference type="PRO" id="PR:Q9SNB7"/>
<dbReference type="Proteomes" id="UP000006548">
    <property type="component" value="Chromosome 3"/>
</dbReference>
<dbReference type="ExpressionAtlas" id="Q9SNB7">
    <property type="expression patterns" value="baseline and differential"/>
</dbReference>
<dbReference type="GO" id="GO:0009570">
    <property type="term" value="C:chloroplast stroma"/>
    <property type="evidence" value="ECO:0000314"/>
    <property type="project" value="UniProtKB"/>
</dbReference>
<dbReference type="GO" id="GO:0009535">
    <property type="term" value="C:chloroplast thylakoid membrane"/>
    <property type="evidence" value="ECO:0000314"/>
    <property type="project" value="UniProtKB"/>
</dbReference>
<dbReference type="GO" id="GO:0003729">
    <property type="term" value="F:mRNA binding"/>
    <property type="evidence" value="ECO:0000314"/>
    <property type="project" value="TAIR"/>
</dbReference>
<dbReference type="GO" id="GO:0043022">
    <property type="term" value="F:ribosome binding"/>
    <property type="evidence" value="ECO:0000315"/>
    <property type="project" value="UniProtKB"/>
</dbReference>
<dbReference type="GO" id="GO:0003723">
    <property type="term" value="F:RNA binding"/>
    <property type="evidence" value="ECO:0000314"/>
    <property type="project" value="UniProtKB"/>
</dbReference>
<dbReference type="GO" id="GO:0008494">
    <property type="term" value="F:translation activator activity"/>
    <property type="evidence" value="ECO:0000315"/>
    <property type="project" value="TAIR"/>
</dbReference>
<dbReference type="GO" id="GO:0010207">
    <property type="term" value="P:photosystem II assembly"/>
    <property type="evidence" value="ECO:0000315"/>
    <property type="project" value="UniProtKB"/>
</dbReference>
<dbReference type="GO" id="GO:0032544">
    <property type="term" value="P:plastid translation"/>
    <property type="evidence" value="ECO:0000315"/>
    <property type="project" value="TAIR"/>
</dbReference>
<dbReference type="GO" id="GO:0009416">
    <property type="term" value="P:response to light stimulus"/>
    <property type="evidence" value="ECO:0000314"/>
    <property type="project" value="UniProtKB"/>
</dbReference>
<dbReference type="GO" id="GO:0006413">
    <property type="term" value="P:translational initiation"/>
    <property type="evidence" value="ECO:0000315"/>
    <property type="project" value="UniProtKB"/>
</dbReference>
<dbReference type="Gene3D" id="1.25.40.10">
    <property type="entry name" value="Tetratricopeptide repeat domain"/>
    <property type="match status" value="4"/>
</dbReference>
<dbReference type="InterPro" id="IPR002885">
    <property type="entry name" value="Pentatricopeptide_rpt"/>
</dbReference>
<dbReference type="InterPro" id="IPR033443">
    <property type="entry name" value="PROP1-like_PPR_dom"/>
</dbReference>
<dbReference type="InterPro" id="IPR053343">
    <property type="entry name" value="PSII_mRNA-binding_protein"/>
</dbReference>
<dbReference type="InterPro" id="IPR011990">
    <property type="entry name" value="TPR-like_helical_dom_sf"/>
</dbReference>
<dbReference type="NCBIfam" id="TIGR00756">
    <property type="entry name" value="PPR"/>
    <property type="match status" value="4"/>
</dbReference>
<dbReference type="PANTHER" id="PTHR47940">
    <property type="entry name" value="OS12G0283900 PROTEIN"/>
    <property type="match status" value="1"/>
</dbReference>
<dbReference type="PANTHER" id="PTHR47940:SF1">
    <property type="entry name" value="PROTEIN LOW PHOTOSYNTHETIC EFFICIENCY 1, CHLOROPLASTIC"/>
    <property type="match status" value="1"/>
</dbReference>
<dbReference type="Pfam" id="PF01535">
    <property type="entry name" value="PPR"/>
    <property type="match status" value="1"/>
</dbReference>
<dbReference type="Pfam" id="PF13812">
    <property type="entry name" value="PPR_3"/>
    <property type="match status" value="1"/>
</dbReference>
<dbReference type="Pfam" id="PF17177">
    <property type="entry name" value="PPR_long"/>
    <property type="match status" value="1"/>
</dbReference>
<dbReference type="PROSITE" id="PS51375">
    <property type="entry name" value="PPR"/>
    <property type="match status" value="12"/>
</dbReference>
<feature type="transit peptide" description="Chloroplast" evidence="1">
    <location>
        <begin position="1"/>
        <end position="68"/>
    </location>
</feature>
<feature type="chain" id="PRO_0000356123" description="Protein LOW PHOTOSYNTHETIC EFFICIENCY 1, chloroplastic">
    <location>
        <begin position="69"/>
        <end position="665"/>
    </location>
</feature>
<feature type="repeat" description="PPR 1" evidence="2">
    <location>
        <begin position="145"/>
        <end position="179"/>
    </location>
</feature>
<feature type="repeat" description="PPR 2" evidence="2">
    <location>
        <begin position="181"/>
        <end position="217"/>
    </location>
</feature>
<feature type="repeat" description="PPR 3" evidence="2">
    <location>
        <begin position="218"/>
        <end position="252"/>
    </location>
</feature>
<feature type="repeat" description="PPR 4" evidence="2">
    <location>
        <begin position="253"/>
        <end position="283"/>
    </location>
</feature>
<feature type="repeat" description="PPR 5" evidence="2">
    <location>
        <begin position="309"/>
        <end position="344"/>
    </location>
</feature>
<feature type="repeat" description="PPR 6" evidence="2">
    <location>
        <begin position="345"/>
        <end position="375"/>
    </location>
</feature>
<feature type="repeat" description="PPR 7" evidence="2">
    <location>
        <begin position="380"/>
        <end position="414"/>
    </location>
</feature>
<feature type="repeat" description="PPR 8" evidence="2">
    <location>
        <begin position="422"/>
        <end position="456"/>
    </location>
</feature>
<feature type="repeat" description="PPR 9" evidence="2">
    <location>
        <begin position="457"/>
        <end position="491"/>
    </location>
</feature>
<feature type="repeat" description="PPR 10" evidence="2">
    <location>
        <begin position="492"/>
        <end position="526"/>
    </location>
</feature>
<feature type="repeat" description="PPR 11" evidence="2">
    <location>
        <begin position="527"/>
        <end position="561"/>
    </location>
</feature>
<feature type="repeat" description="PPR 12" evidence="2">
    <location>
        <begin position="562"/>
        <end position="596"/>
    </location>
</feature>
<feature type="repeat" description="PPR 13" evidence="2">
    <location>
        <begin position="597"/>
        <end position="631"/>
    </location>
</feature>
<sequence>MQALSILPLKSGLLVGSRLEFELDCSCFVVSPKTTRKRLCFLEQACFGSSSSISSFIFVSSNRKVLFLCEPKRSLLGSSFGVGWATEQRELELGEEEVSTEDLSSANGGEKNNLRVDVRELAFSLRAAKTADDVDAVLKDKGELPLQVFCAMIKGFGKDKRLKPAVAVVDWLKRKKSESGGVIGPNLFIYNSLLGAMRGFGEAEKILKDMEEEGIVPNIVTYNTLMVIYMEEGEFLKALGILDLTKEKGFEPNPITYSTALLVYRRMEDGMGALEFFVELREKYAKREIGNDVGYDWEFEFVKLENFIGRICYQVMRRWLVKDDNWTTRVLKLLNAMDSAGVRPSREEHERLIWACTREEHYIVGKELYKRIRERFSEISLSVCNHLIWLMGKAKKWWAALEIYEDLLDEGPEPNNLSYELVVSHFNILLSAASKRGIWRWGVRLLNKMEDKGLKPQRRHWNAVLVACSKASETTAAIQIFKAMVDNGEKPTVISYGALLSALEKGKLYDEAFRVWNHMIKVGIEPNLYAYTTMASVLTGQQKFNLLDTLLKEMASKGIEPSVVTFNAVISGCARNGLSGVAYEWFHRMKSENVEPNEITYEMLIEALANDAKPRLAYELHVKAQNEGLKLSSKPYDAVVKSAETYGATIDLNLLGPRPDKKNRP</sequence>
<name>PP264_ARATH</name>
<comment type="function">
    <text evidence="3 4">Required for light-regulated photosystem II (PSII) biogenesis and grana thylakoids formation by binding to the 5' UTR of PSII subunit mRNAs (e.g. psbJ, psbN and psbA) in a light-dependent manner through a redox-based mechanism, and facilitating the association of HCF173 with target mRNAs, which encodes PSII reaction center proteins (e.g. J, N and D1), thus regulating its expression by modulating ribosome loading.</text>
</comment>
<comment type="subunit">
    <text evidence="3">Interacts with HCF173.</text>
</comment>
<comment type="subcellular location">
    <subcellularLocation>
        <location evidence="3">Plastid</location>
        <location evidence="3">Chloroplast thylakoid membrane</location>
        <topology evidence="3">Peripheral membrane protein</topology>
        <orientation evidence="3">Stromal side</orientation>
    </subcellularLocation>
    <subcellularLocation>
        <location evidence="3">Plastid</location>
        <location evidence="3">Chloroplast stroma</location>
    </subcellularLocation>
    <text evidence="3">Predominantly present at thylakoid membranes.</text>
</comment>
<comment type="disruption phenotype">
    <text evidence="3 4">Retardation of photoautotrophic growth (PubMed:29891689). Reduced efficiency of photosystem II (PSII) subunit mRNAs (e.g. psbJ, psbN and psbA) ribosome loading and impaired synthesis of PSII reaction center proteins (e.g. J, N and D1) leading to reduced PSII activity and biogenesis, as well as reduced grana thylakoid formation (PubMed:29891689, PubMed:30844105). Reduced production of PSII subunits D1, D2, CP43, CP47, PsbE, PsbF, and PsbO, and, to a lower extent, of PSI subunits PsaA and PsaB (PubMed:29891689, PubMed:30844105). High levels of nonphotochemical quenching (NPQ) (PubMed:29891689).</text>
</comment>
<comment type="similarity">
    <text evidence="6">Belongs to the PPR family. P subfamily.</text>
</comment>
<comment type="sequence caution" evidence="6">
    <conflict type="miscellaneous discrepancy">
        <sequence resource="EMBL" id="BX825001"/>
    </conflict>
    <text>Sequencing errors.</text>
</comment>
<comment type="online information" name="Pentatricopeptide repeat proteins">
    <link uri="https://ppr.plantenergy.uwa.edu.au"/>
</comment>
<reference key="1">
    <citation type="journal article" date="2000" name="Nature">
        <title>Sequence and analysis of chromosome 3 of the plant Arabidopsis thaliana.</title>
        <authorList>
            <person name="Salanoubat M."/>
            <person name="Lemcke K."/>
            <person name="Rieger M."/>
            <person name="Ansorge W."/>
            <person name="Unseld M."/>
            <person name="Fartmann B."/>
            <person name="Valle G."/>
            <person name="Bloecker H."/>
            <person name="Perez-Alonso M."/>
            <person name="Obermaier B."/>
            <person name="Delseny M."/>
            <person name="Boutry M."/>
            <person name="Grivell L.A."/>
            <person name="Mache R."/>
            <person name="Puigdomenech P."/>
            <person name="De Simone V."/>
            <person name="Choisne N."/>
            <person name="Artiguenave F."/>
            <person name="Robert C."/>
            <person name="Brottier P."/>
            <person name="Wincker P."/>
            <person name="Cattolico L."/>
            <person name="Weissenbach J."/>
            <person name="Saurin W."/>
            <person name="Quetier F."/>
            <person name="Schaefer M."/>
            <person name="Mueller-Auer S."/>
            <person name="Gabel C."/>
            <person name="Fuchs M."/>
            <person name="Benes V."/>
            <person name="Wurmbach E."/>
            <person name="Drzonek H."/>
            <person name="Erfle H."/>
            <person name="Jordan N."/>
            <person name="Bangert S."/>
            <person name="Wiedelmann R."/>
            <person name="Kranz H."/>
            <person name="Voss H."/>
            <person name="Holland R."/>
            <person name="Brandt P."/>
            <person name="Nyakatura G."/>
            <person name="Vezzi A."/>
            <person name="D'Angelo M."/>
            <person name="Pallavicini A."/>
            <person name="Toppo S."/>
            <person name="Simionati B."/>
            <person name="Conrad A."/>
            <person name="Hornischer K."/>
            <person name="Kauer G."/>
            <person name="Loehnert T.-H."/>
            <person name="Nordsiek G."/>
            <person name="Reichelt J."/>
            <person name="Scharfe M."/>
            <person name="Schoen O."/>
            <person name="Bargues M."/>
            <person name="Terol J."/>
            <person name="Climent J."/>
            <person name="Navarro P."/>
            <person name="Collado C."/>
            <person name="Perez-Perez A."/>
            <person name="Ottenwaelder B."/>
            <person name="Duchemin D."/>
            <person name="Cooke R."/>
            <person name="Laudie M."/>
            <person name="Berger-Llauro C."/>
            <person name="Purnelle B."/>
            <person name="Masuy D."/>
            <person name="de Haan M."/>
            <person name="Maarse A.C."/>
            <person name="Alcaraz J.-P."/>
            <person name="Cottet A."/>
            <person name="Casacuberta E."/>
            <person name="Monfort A."/>
            <person name="Argiriou A."/>
            <person name="Flores M."/>
            <person name="Liguori R."/>
            <person name="Vitale D."/>
            <person name="Mannhaupt G."/>
            <person name="Haase D."/>
            <person name="Schoof H."/>
            <person name="Rudd S."/>
            <person name="Zaccaria P."/>
            <person name="Mewes H.-W."/>
            <person name="Mayer K.F.X."/>
            <person name="Kaul S."/>
            <person name="Town C.D."/>
            <person name="Koo H.L."/>
            <person name="Tallon L.J."/>
            <person name="Jenkins J."/>
            <person name="Rooney T."/>
            <person name="Rizzo M."/>
            <person name="Walts A."/>
            <person name="Utterback T."/>
            <person name="Fujii C.Y."/>
            <person name="Shea T.P."/>
            <person name="Creasy T.H."/>
            <person name="Haas B."/>
            <person name="Maiti R."/>
            <person name="Wu D."/>
            <person name="Peterson J."/>
            <person name="Van Aken S."/>
            <person name="Pai G."/>
            <person name="Militscher J."/>
            <person name="Sellers P."/>
            <person name="Gill J.E."/>
            <person name="Feldblyum T.V."/>
            <person name="Preuss D."/>
            <person name="Lin X."/>
            <person name="Nierman W.C."/>
            <person name="Salzberg S.L."/>
            <person name="White O."/>
            <person name="Venter J.C."/>
            <person name="Fraser C.M."/>
            <person name="Kaneko T."/>
            <person name="Nakamura Y."/>
            <person name="Sato S."/>
            <person name="Kato T."/>
            <person name="Asamizu E."/>
            <person name="Sasamoto S."/>
            <person name="Kimura T."/>
            <person name="Idesawa K."/>
            <person name="Kawashima K."/>
            <person name="Kishida Y."/>
            <person name="Kiyokawa C."/>
            <person name="Kohara M."/>
            <person name="Matsumoto M."/>
            <person name="Matsuno A."/>
            <person name="Muraki A."/>
            <person name="Nakayama S."/>
            <person name="Nakazaki N."/>
            <person name="Shinpo S."/>
            <person name="Takeuchi C."/>
            <person name="Wada T."/>
            <person name="Watanabe A."/>
            <person name="Yamada M."/>
            <person name="Yasuda M."/>
            <person name="Tabata S."/>
        </authorList>
    </citation>
    <scope>NUCLEOTIDE SEQUENCE [LARGE SCALE GENOMIC DNA]</scope>
    <source>
        <strain>cv. Columbia</strain>
    </source>
</reference>
<reference key="2">
    <citation type="journal article" date="2017" name="Plant J.">
        <title>Araport11: a complete reannotation of the Arabidopsis thaliana reference genome.</title>
        <authorList>
            <person name="Cheng C.Y."/>
            <person name="Krishnakumar V."/>
            <person name="Chan A.P."/>
            <person name="Thibaud-Nissen F."/>
            <person name="Schobel S."/>
            <person name="Town C.D."/>
        </authorList>
    </citation>
    <scope>GENOME REANNOTATION</scope>
    <source>
        <strain>cv. Columbia</strain>
    </source>
</reference>
<reference key="3">
    <citation type="journal article" date="2004" name="Genome Res.">
        <title>Whole genome sequence comparisons and 'full-length' cDNA sequences: a combined approach to evaluate and improve Arabidopsis genome annotation.</title>
        <authorList>
            <person name="Castelli V."/>
            <person name="Aury J.-M."/>
            <person name="Jaillon O."/>
            <person name="Wincker P."/>
            <person name="Clepet C."/>
            <person name="Menard M."/>
            <person name="Cruaud C."/>
            <person name="Quetier F."/>
            <person name="Scarpelli C."/>
            <person name="Schaechter V."/>
            <person name="Temple G."/>
            <person name="Caboche M."/>
            <person name="Weissenbach J."/>
            <person name="Salanoubat M."/>
        </authorList>
    </citation>
    <scope>NUCLEOTIDE SEQUENCE [LARGE SCALE MRNA]</scope>
    <source>
        <strain>cv. Columbia</strain>
    </source>
</reference>
<reference key="4">
    <citation type="journal article" date="2004" name="Plant Cell">
        <title>Genome-wide analysis of Arabidopsis pentatricopeptide repeat proteins reveals their essential role in organelle biogenesis.</title>
        <authorList>
            <person name="Lurin C."/>
            <person name="Andres C."/>
            <person name="Aubourg S."/>
            <person name="Bellaoui M."/>
            <person name="Bitton F."/>
            <person name="Bruyere C."/>
            <person name="Caboche M."/>
            <person name="Debast C."/>
            <person name="Gualberto J."/>
            <person name="Hoffmann B."/>
            <person name="Lecharny A."/>
            <person name="Le Ret M."/>
            <person name="Martin-Magniette M.-L."/>
            <person name="Mireau H."/>
            <person name="Peeters N."/>
            <person name="Renou J.-P."/>
            <person name="Szurek B."/>
            <person name="Taconnat L."/>
            <person name="Small I."/>
        </authorList>
    </citation>
    <scope>GENE FAMILY</scope>
</reference>
<reference key="5">
    <citation type="journal article" date="2018" name="Proc. Natl. Acad. Sci. U.S.A.">
        <title>LOW PHOTOSYNTHETIC EFFICIENCY 1 is required for light-regulated photosystem II biogenesis in Arabidopsis.</title>
        <authorList>
            <person name="Jin H."/>
            <person name="Fu M."/>
            <person name="Duan Z."/>
            <person name="Duan S."/>
            <person name="Li M."/>
            <person name="Dong X."/>
            <person name="Liu B."/>
            <person name="Feng D."/>
            <person name="Wang J."/>
            <person name="Peng L."/>
            <person name="Wang H.-B."/>
        </authorList>
    </citation>
    <scope>FUNCTION</scope>
    <scope>DISRUPTION PHENOTYPE</scope>
    <scope>INTERACTION WITH HCF173</scope>
    <scope>SUBCELLULAR LOCATION</scope>
    <source>
        <strain>cv. Columbia</strain>
    </source>
</reference>
<reference key="6">
    <citation type="journal article" date="2019" name="Plant J.">
        <title>The Arabidopsis pentatricopeptide repeat protein LPE1 and its maize ortholog are required for translation of the chloroplast psbJ RNA.</title>
        <authorList>
            <person name="Williams-Carrier R."/>
            <person name="Brewster C."/>
            <person name="Belcher S.E."/>
            <person name="Rojas M."/>
            <person name="Chotewutmontri P."/>
            <person name="Ljungdahl S."/>
            <person name="Barkan A."/>
        </authorList>
    </citation>
    <scope>FUNCTION</scope>
    <scope>DISRUPTION PHENOTYPE</scope>
    <source>
        <strain>cv. Columbia</strain>
    </source>
</reference>
<protein>
    <recommendedName>
        <fullName evidence="5">Protein LOW PHOTOSYNTHETIC EFFICIENCY 1, chloroplastic</fullName>
    </recommendedName>
</protein>
<evidence type="ECO:0000255" key="1"/>
<evidence type="ECO:0000255" key="2">
    <source>
        <dbReference type="PROSITE-ProRule" id="PRU00708"/>
    </source>
</evidence>
<evidence type="ECO:0000269" key="3">
    <source>
    </source>
</evidence>
<evidence type="ECO:0000269" key="4">
    <source>
    </source>
</evidence>
<evidence type="ECO:0000303" key="5">
    <source>
    </source>
</evidence>
<evidence type="ECO:0000305" key="6"/>
<evidence type="ECO:0000312" key="7">
    <source>
        <dbReference type="Araport" id="AT3G46610"/>
    </source>
</evidence>
<evidence type="ECO:0000312" key="8">
    <source>
        <dbReference type="EMBL" id="CAB62331.1"/>
    </source>
</evidence>
<organism>
    <name type="scientific">Arabidopsis thaliana</name>
    <name type="common">Mouse-ear cress</name>
    <dbReference type="NCBI Taxonomy" id="3702"/>
    <lineage>
        <taxon>Eukaryota</taxon>
        <taxon>Viridiplantae</taxon>
        <taxon>Streptophyta</taxon>
        <taxon>Embryophyta</taxon>
        <taxon>Tracheophyta</taxon>
        <taxon>Spermatophyta</taxon>
        <taxon>Magnoliopsida</taxon>
        <taxon>eudicotyledons</taxon>
        <taxon>Gunneridae</taxon>
        <taxon>Pentapetalae</taxon>
        <taxon>rosids</taxon>
        <taxon>malvids</taxon>
        <taxon>Brassicales</taxon>
        <taxon>Brassicaceae</taxon>
        <taxon>Camelineae</taxon>
        <taxon>Arabidopsis</taxon>
    </lineage>
</organism>
<proteinExistence type="evidence at protein level"/>
<accession>Q9SNB7</accession>
<keyword id="KW-0150">Chloroplast</keyword>
<keyword id="KW-0472">Membrane</keyword>
<keyword id="KW-0934">Plastid</keyword>
<keyword id="KW-1185">Reference proteome</keyword>
<keyword id="KW-0677">Repeat</keyword>
<keyword id="KW-0694">RNA-binding</keyword>
<keyword id="KW-0793">Thylakoid</keyword>
<keyword id="KW-0809">Transit peptide</keyword>
<gene>
    <name evidence="5" type="primary">LPE1</name>
    <name evidence="7" type="ordered locus">At3g46610</name>
    <name evidence="8" type="ORF">F12A12.130</name>
</gene>